<comment type="function">
    <text evidence="1">Required for accurate and efficient protein synthesis under certain stress conditions. May act as a fidelity factor of the translation reaction, by catalyzing a one-codon backward translocation of tRNAs on improperly translocated ribosomes. Back-translocation proceeds from a post-translocation (POST) complex to a pre-translocation (PRE) complex, thus giving elongation factor G a second chance to translocate the tRNAs correctly. Binds to ribosomes in a GTP-dependent manner.</text>
</comment>
<comment type="catalytic activity">
    <reaction evidence="1">
        <text>GTP + H2O = GDP + phosphate + H(+)</text>
        <dbReference type="Rhea" id="RHEA:19669"/>
        <dbReference type="ChEBI" id="CHEBI:15377"/>
        <dbReference type="ChEBI" id="CHEBI:15378"/>
        <dbReference type="ChEBI" id="CHEBI:37565"/>
        <dbReference type="ChEBI" id="CHEBI:43474"/>
        <dbReference type="ChEBI" id="CHEBI:58189"/>
        <dbReference type="EC" id="3.6.5.n1"/>
    </reaction>
</comment>
<comment type="subcellular location">
    <subcellularLocation>
        <location evidence="1">Cell inner membrane</location>
        <topology evidence="1">Peripheral membrane protein</topology>
        <orientation evidence="1">Cytoplasmic side</orientation>
    </subcellularLocation>
</comment>
<comment type="similarity">
    <text evidence="1">Belongs to the TRAFAC class translation factor GTPase superfamily. Classic translation factor GTPase family. LepA subfamily.</text>
</comment>
<protein>
    <recommendedName>
        <fullName evidence="1">Elongation factor 4</fullName>
        <shortName evidence="1">EF-4</shortName>
        <ecNumber evidence="1">3.6.5.n1</ecNumber>
    </recommendedName>
    <alternativeName>
        <fullName evidence="1">Ribosomal back-translocase LepA</fullName>
    </alternativeName>
</protein>
<keyword id="KW-0997">Cell inner membrane</keyword>
<keyword id="KW-1003">Cell membrane</keyword>
<keyword id="KW-0342">GTP-binding</keyword>
<keyword id="KW-0378">Hydrolase</keyword>
<keyword id="KW-0472">Membrane</keyword>
<keyword id="KW-0547">Nucleotide-binding</keyword>
<keyword id="KW-0648">Protein biosynthesis</keyword>
<keyword id="KW-1185">Reference proteome</keyword>
<proteinExistence type="inferred from homology"/>
<feature type="chain" id="PRO_0000265684" description="Elongation factor 4">
    <location>
        <begin position="1"/>
        <end position="603"/>
    </location>
</feature>
<feature type="domain" description="tr-type G">
    <location>
        <begin position="2"/>
        <end position="184"/>
    </location>
</feature>
<feature type="binding site" evidence="1">
    <location>
        <begin position="14"/>
        <end position="19"/>
    </location>
    <ligand>
        <name>GTP</name>
        <dbReference type="ChEBI" id="CHEBI:37565"/>
    </ligand>
</feature>
<feature type="binding site" evidence="1">
    <location>
        <begin position="131"/>
        <end position="134"/>
    </location>
    <ligand>
        <name>GTP</name>
        <dbReference type="ChEBI" id="CHEBI:37565"/>
    </ligand>
</feature>
<gene>
    <name evidence="1" type="primary">lepA</name>
    <name type="ordered locus">Bpro_3638</name>
</gene>
<organism>
    <name type="scientific">Polaromonas sp. (strain JS666 / ATCC BAA-500)</name>
    <dbReference type="NCBI Taxonomy" id="296591"/>
    <lineage>
        <taxon>Bacteria</taxon>
        <taxon>Pseudomonadati</taxon>
        <taxon>Pseudomonadota</taxon>
        <taxon>Betaproteobacteria</taxon>
        <taxon>Burkholderiales</taxon>
        <taxon>Comamonadaceae</taxon>
        <taxon>Polaromonas</taxon>
    </lineage>
</organism>
<reference key="1">
    <citation type="journal article" date="2008" name="Appl. Environ. Microbiol.">
        <title>The genome of Polaromonas sp. strain JS666: insights into the evolution of a hydrocarbon- and xenobiotic-degrading bacterium, and features of relevance to biotechnology.</title>
        <authorList>
            <person name="Mattes T.E."/>
            <person name="Alexander A.K."/>
            <person name="Richardson P.M."/>
            <person name="Munk A.C."/>
            <person name="Han C.S."/>
            <person name="Stothard P."/>
            <person name="Coleman N.V."/>
        </authorList>
    </citation>
    <scope>NUCLEOTIDE SEQUENCE [LARGE SCALE GENOMIC DNA]</scope>
    <source>
        <strain>JS666 / ATCC BAA-500</strain>
    </source>
</reference>
<name>LEPA_POLSJ</name>
<dbReference type="EC" id="3.6.5.n1" evidence="1"/>
<dbReference type="EMBL" id="CP000316">
    <property type="protein sequence ID" value="ABE45542.1"/>
    <property type="molecule type" value="Genomic_DNA"/>
</dbReference>
<dbReference type="RefSeq" id="WP_011484534.1">
    <property type="nucleotide sequence ID" value="NC_007948.1"/>
</dbReference>
<dbReference type="SMR" id="Q126K0"/>
<dbReference type="STRING" id="296591.Bpro_3638"/>
<dbReference type="KEGG" id="pol:Bpro_3638"/>
<dbReference type="eggNOG" id="COG0481">
    <property type="taxonomic scope" value="Bacteria"/>
</dbReference>
<dbReference type="HOGENOM" id="CLU_009995_3_3_4"/>
<dbReference type="OrthoDB" id="9801472at2"/>
<dbReference type="Proteomes" id="UP000001983">
    <property type="component" value="Chromosome"/>
</dbReference>
<dbReference type="GO" id="GO:0005886">
    <property type="term" value="C:plasma membrane"/>
    <property type="evidence" value="ECO:0007669"/>
    <property type="project" value="UniProtKB-SubCell"/>
</dbReference>
<dbReference type="GO" id="GO:0005525">
    <property type="term" value="F:GTP binding"/>
    <property type="evidence" value="ECO:0007669"/>
    <property type="project" value="UniProtKB-UniRule"/>
</dbReference>
<dbReference type="GO" id="GO:0003924">
    <property type="term" value="F:GTPase activity"/>
    <property type="evidence" value="ECO:0007669"/>
    <property type="project" value="UniProtKB-UniRule"/>
</dbReference>
<dbReference type="GO" id="GO:0097216">
    <property type="term" value="F:guanosine tetraphosphate binding"/>
    <property type="evidence" value="ECO:0007669"/>
    <property type="project" value="UniProtKB-ARBA"/>
</dbReference>
<dbReference type="GO" id="GO:0043022">
    <property type="term" value="F:ribosome binding"/>
    <property type="evidence" value="ECO:0007669"/>
    <property type="project" value="UniProtKB-UniRule"/>
</dbReference>
<dbReference type="GO" id="GO:0003746">
    <property type="term" value="F:translation elongation factor activity"/>
    <property type="evidence" value="ECO:0007669"/>
    <property type="project" value="UniProtKB-UniRule"/>
</dbReference>
<dbReference type="GO" id="GO:0045727">
    <property type="term" value="P:positive regulation of translation"/>
    <property type="evidence" value="ECO:0007669"/>
    <property type="project" value="UniProtKB-UniRule"/>
</dbReference>
<dbReference type="CDD" id="cd16260">
    <property type="entry name" value="EF4_III"/>
    <property type="match status" value="1"/>
</dbReference>
<dbReference type="CDD" id="cd01890">
    <property type="entry name" value="LepA"/>
    <property type="match status" value="1"/>
</dbReference>
<dbReference type="CDD" id="cd03709">
    <property type="entry name" value="lepA_C"/>
    <property type="match status" value="1"/>
</dbReference>
<dbReference type="FunFam" id="3.40.50.300:FF:000078">
    <property type="entry name" value="Elongation factor 4"/>
    <property type="match status" value="1"/>
</dbReference>
<dbReference type="FunFam" id="2.40.30.10:FF:000015">
    <property type="entry name" value="Translation factor GUF1, mitochondrial"/>
    <property type="match status" value="1"/>
</dbReference>
<dbReference type="FunFam" id="3.30.70.240:FF:000007">
    <property type="entry name" value="Translation factor GUF1, mitochondrial"/>
    <property type="match status" value="1"/>
</dbReference>
<dbReference type="FunFam" id="3.30.70.2570:FF:000001">
    <property type="entry name" value="Translation factor GUF1, mitochondrial"/>
    <property type="match status" value="1"/>
</dbReference>
<dbReference type="FunFam" id="3.30.70.870:FF:000004">
    <property type="entry name" value="Translation factor GUF1, mitochondrial"/>
    <property type="match status" value="1"/>
</dbReference>
<dbReference type="Gene3D" id="3.30.70.240">
    <property type="match status" value="1"/>
</dbReference>
<dbReference type="Gene3D" id="3.30.70.2570">
    <property type="entry name" value="Elongation factor 4, C-terminal domain"/>
    <property type="match status" value="1"/>
</dbReference>
<dbReference type="Gene3D" id="3.30.70.870">
    <property type="entry name" value="Elongation Factor G (Translational Gtpase), domain 3"/>
    <property type="match status" value="1"/>
</dbReference>
<dbReference type="Gene3D" id="3.40.50.300">
    <property type="entry name" value="P-loop containing nucleotide triphosphate hydrolases"/>
    <property type="match status" value="1"/>
</dbReference>
<dbReference type="Gene3D" id="2.40.30.10">
    <property type="entry name" value="Translation factors"/>
    <property type="match status" value="1"/>
</dbReference>
<dbReference type="HAMAP" id="MF_00071">
    <property type="entry name" value="LepA"/>
    <property type="match status" value="1"/>
</dbReference>
<dbReference type="InterPro" id="IPR006297">
    <property type="entry name" value="EF-4"/>
</dbReference>
<dbReference type="InterPro" id="IPR035647">
    <property type="entry name" value="EFG_III/V"/>
</dbReference>
<dbReference type="InterPro" id="IPR000640">
    <property type="entry name" value="EFG_V-like"/>
</dbReference>
<dbReference type="InterPro" id="IPR004161">
    <property type="entry name" value="EFTu-like_2"/>
</dbReference>
<dbReference type="InterPro" id="IPR031157">
    <property type="entry name" value="G_TR_CS"/>
</dbReference>
<dbReference type="InterPro" id="IPR038363">
    <property type="entry name" value="LepA_C_sf"/>
</dbReference>
<dbReference type="InterPro" id="IPR013842">
    <property type="entry name" value="LepA_CTD"/>
</dbReference>
<dbReference type="InterPro" id="IPR035654">
    <property type="entry name" value="LepA_IV"/>
</dbReference>
<dbReference type="InterPro" id="IPR027417">
    <property type="entry name" value="P-loop_NTPase"/>
</dbReference>
<dbReference type="InterPro" id="IPR005225">
    <property type="entry name" value="Small_GTP-bd"/>
</dbReference>
<dbReference type="InterPro" id="IPR000795">
    <property type="entry name" value="T_Tr_GTP-bd_dom"/>
</dbReference>
<dbReference type="InterPro" id="IPR009000">
    <property type="entry name" value="Transl_B-barrel_sf"/>
</dbReference>
<dbReference type="NCBIfam" id="TIGR01393">
    <property type="entry name" value="lepA"/>
    <property type="match status" value="1"/>
</dbReference>
<dbReference type="NCBIfam" id="TIGR00231">
    <property type="entry name" value="small_GTP"/>
    <property type="match status" value="1"/>
</dbReference>
<dbReference type="PANTHER" id="PTHR43512:SF4">
    <property type="entry name" value="TRANSLATION FACTOR GUF1 HOMOLOG, CHLOROPLASTIC"/>
    <property type="match status" value="1"/>
</dbReference>
<dbReference type="PANTHER" id="PTHR43512">
    <property type="entry name" value="TRANSLATION FACTOR GUF1-RELATED"/>
    <property type="match status" value="1"/>
</dbReference>
<dbReference type="Pfam" id="PF00679">
    <property type="entry name" value="EFG_C"/>
    <property type="match status" value="1"/>
</dbReference>
<dbReference type="Pfam" id="PF00009">
    <property type="entry name" value="GTP_EFTU"/>
    <property type="match status" value="1"/>
</dbReference>
<dbReference type="Pfam" id="PF03144">
    <property type="entry name" value="GTP_EFTU_D2"/>
    <property type="match status" value="1"/>
</dbReference>
<dbReference type="Pfam" id="PF06421">
    <property type="entry name" value="LepA_C"/>
    <property type="match status" value="1"/>
</dbReference>
<dbReference type="PRINTS" id="PR00315">
    <property type="entry name" value="ELONGATNFCT"/>
</dbReference>
<dbReference type="SMART" id="SM00838">
    <property type="entry name" value="EFG_C"/>
    <property type="match status" value="1"/>
</dbReference>
<dbReference type="SUPFAM" id="SSF54980">
    <property type="entry name" value="EF-G C-terminal domain-like"/>
    <property type="match status" value="2"/>
</dbReference>
<dbReference type="SUPFAM" id="SSF52540">
    <property type="entry name" value="P-loop containing nucleoside triphosphate hydrolases"/>
    <property type="match status" value="1"/>
</dbReference>
<dbReference type="SUPFAM" id="SSF50447">
    <property type="entry name" value="Translation proteins"/>
    <property type="match status" value="1"/>
</dbReference>
<dbReference type="PROSITE" id="PS00301">
    <property type="entry name" value="G_TR_1"/>
    <property type="match status" value="1"/>
</dbReference>
<dbReference type="PROSITE" id="PS51722">
    <property type="entry name" value="G_TR_2"/>
    <property type="match status" value="1"/>
</dbReference>
<evidence type="ECO:0000255" key="1">
    <source>
        <dbReference type="HAMAP-Rule" id="MF_00071"/>
    </source>
</evidence>
<accession>Q126K0</accession>
<sequence length="603" mass="66295">MNHIRNFSIIAHIDHGKSTLADRIIQRCGGLQDREMSAQVLDSMDLEKERGITIKAQTAALKYKARDGQIYNLNLIDTPGHVDFSYEVSRSLSACEGALLVVDASQGVEAQTVANCYTALDLGVEVVPVLNKMDLPQADPENAKQEIEDVIGIDATDAIPCSAKTGMGIDEILEAVIARVPPPKGNPDGALRAMIIDSWYDAYVGVVMLVRVVDGRLAKGDRIKLMASEAMYNAEQLGVFTPHTEPRQSLEAGEVGFVIAGIKELQAARVGDTVTLIKPGTGGAAFTATQALPGFKEIQPQVFAGLYPTEASEYDSLRDALEKLKLNDASLHYEPEVSQALGFGFRCGFLGLLHMEIVQERLEREFDQDLITTAPSVVYEVLKADGEIIKVENPSKIPDAGRVTEIREPIVTVHLYMPQDYVGAVMTLANLKRGVQLNMAYHGKQVMLTYEMPLGEIVLDFFDKLKSVSRGYASMDYEFKEFRASDVVKVDILLNGEKVDALSIIVHRSQSAYRGRAVVAKMREIISRQQFDVAIQAAIGANIIARETIKALRKNVIAKCYGGDISRKRKLLEKQKAGKKRMKQIGSVEVPQEAFLAILQVEE</sequence>